<comment type="function">
    <text evidence="1">Catalyzes the conversion of dethiobiotin (DTB) to biotin by the insertion of a sulfur atom into dethiobiotin via a radical-based mechanism.</text>
</comment>
<comment type="catalytic activity">
    <reaction evidence="1">
        <text>(4R,5S)-dethiobiotin + (sulfur carrier)-SH + 2 reduced [2Fe-2S]-[ferredoxin] + 2 S-adenosyl-L-methionine = (sulfur carrier)-H + biotin + 2 5'-deoxyadenosine + 2 L-methionine + 2 oxidized [2Fe-2S]-[ferredoxin]</text>
        <dbReference type="Rhea" id="RHEA:22060"/>
        <dbReference type="Rhea" id="RHEA-COMP:10000"/>
        <dbReference type="Rhea" id="RHEA-COMP:10001"/>
        <dbReference type="Rhea" id="RHEA-COMP:14737"/>
        <dbReference type="Rhea" id="RHEA-COMP:14739"/>
        <dbReference type="ChEBI" id="CHEBI:17319"/>
        <dbReference type="ChEBI" id="CHEBI:29917"/>
        <dbReference type="ChEBI" id="CHEBI:33737"/>
        <dbReference type="ChEBI" id="CHEBI:33738"/>
        <dbReference type="ChEBI" id="CHEBI:57586"/>
        <dbReference type="ChEBI" id="CHEBI:57844"/>
        <dbReference type="ChEBI" id="CHEBI:59789"/>
        <dbReference type="ChEBI" id="CHEBI:64428"/>
        <dbReference type="ChEBI" id="CHEBI:149473"/>
        <dbReference type="EC" id="2.8.1.6"/>
    </reaction>
</comment>
<comment type="cofactor">
    <cofactor evidence="1">
        <name>[4Fe-4S] cluster</name>
        <dbReference type="ChEBI" id="CHEBI:49883"/>
    </cofactor>
    <text evidence="1">Binds 1 [4Fe-4S] cluster. The cluster is coordinated with 3 cysteines and an exchangeable S-adenosyl-L-methionine.</text>
</comment>
<comment type="cofactor">
    <cofactor evidence="1">
        <name>[2Fe-2S] cluster</name>
        <dbReference type="ChEBI" id="CHEBI:190135"/>
    </cofactor>
    <text evidence="1">Binds 1 [2Fe-2S] cluster. The cluster is coordinated with 3 cysteines and 1 arginine.</text>
</comment>
<comment type="pathway">
    <text evidence="1">Cofactor biosynthesis; biotin biosynthesis; biotin from 7,8-diaminononanoate: step 2/2.</text>
</comment>
<comment type="subunit">
    <text evidence="1">Homodimer.</text>
</comment>
<comment type="similarity">
    <text evidence="1">Belongs to the radical SAM superfamily. Biotin synthase family.</text>
</comment>
<organism>
    <name type="scientific">Bacillus cereus (strain Q1)</name>
    <dbReference type="NCBI Taxonomy" id="361100"/>
    <lineage>
        <taxon>Bacteria</taxon>
        <taxon>Bacillati</taxon>
        <taxon>Bacillota</taxon>
        <taxon>Bacilli</taxon>
        <taxon>Bacillales</taxon>
        <taxon>Bacillaceae</taxon>
        <taxon>Bacillus</taxon>
        <taxon>Bacillus cereus group</taxon>
    </lineage>
</organism>
<proteinExistence type="inferred from homology"/>
<sequence>MKQVQTKRDWKKLAYDVVEEKVITKEDAIAILEADDTEILEIMNAAYIIRHHHFGKKVKLNMIINTKSGLCPEDCGYCSQSIISEAPIDKYAWLTQEKIVEGAHEAIRRKAGTYCIVASGRRPTDKEVNHVIGAVKEIRETTDLKICCCLGFLNEDQAGRLAEAGVHRYNHNLNTHANNYESICSTHTYDDRVDTVQKAKQAGISPCSGAIFGMGETIEERAEIAFELQRIDADSIPCNFLVAVKGTPLEGQKELTPVECLKVLAMMRFVNPTKEIRISGGREINLRSVQPIGLFAANSIFVGDYLTTAGQEPTADWGMIEDLGFEIEECAL</sequence>
<keyword id="KW-0001">2Fe-2S</keyword>
<keyword id="KW-0004">4Fe-4S</keyword>
<keyword id="KW-0093">Biotin biosynthesis</keyword>
<keyword id="KW-0408">Iron</keyword>
<keyword id="KW-0411">Iron-sulfur</keyword>
<keyword id="KW-0479">Metal-binding</keyword>
<keyword id="KW-0949">S-adenosyl-L-methionine</keyword>
<keyword id="KW-0808">Transferase</keyword>
<protein>
    <recommendedName>
        <fullName evidence="1">Biotin synthase</fullName>
        <ecNumber evidence="1">2.8.1.6</ecNumber>
    </recommendedName>
</protein>
<evidence type="ECO:0000255" key="1">
    <source>
        <dbReference type="HAMAP-Rule" id="MF_01694"/>
    </source>
</evidence>
<evidence type="ECO:0000255" key="2">
    <source>
        <dbReference type="PROSITE-ProRule" id="PRU01266"/>
    </source>
</evidence>
<gene>
    <name evidence="1" type="primary">bioB</name>
    <name type="ordered locus">BCQ_3904</name>
</gene>
<dbReference type="EC" id="2.8.1.6" evidence="1"/>
<dbReference type="EMBL" id="CP000227">
    <property type="protein sequence ID" value="ACM14332.1"/>
    <property type="molecule type" value="Genomic_DNA"/>
</dbReference>
<dbReference type="SMR" id="B9IWX7"/>
<dbReference type="KEGG" id="bcq:BCQ_3904"/>
<dbReference type="HOGENOM" id="CLU_033172_2_1_9"/>
<dbReference type="UniPathway" id="UPA00078">
    <property type="reaction ID" value="UER00162"/>
</dbReference>
<dbReference type="Proteomes" id="UP000000441">
    <property type="component" value="Chromosome"/>
</dbReference>
<dbReference type="GO" id="GO:0051537">
    <property type="term" value="F:2 iron, 2 sulfur cluster binding"/>
    <property type="evidence" value="ECO:0007669"/>
    <property type="project" value="UniProtKB-KW"/>
</dbReference>
<dbReference type="GO" id="GO:0051539">
    <property type="term" value="F:4 iron, 4 sulfur cluster binding"/>
    <property type="evidence" value="ECO:0007669"/>
    <property type="project" value="UniProtKB-KW"/>
</dbReference>
<dbReference type="GO" id="GO:0004076">
    <property type="term" value="F:biotin synthase activity"/>
    <property type="evidence" value="ECO:0007669"/>
    <property type="project" value="UniProtKB-UniRule"/>
</dbReference>
<dbReference type="GO" id="GO:0005506">
    <property type="term" value="F:iron ion binding"/>
    <property type="evidence" value="ECO:0007669"/>
    <property type="project" value="UniProtKB-UniRule"/>
</dbReference>
<dbReference type="GO" id="GO:0009102">
    <property type="term" value="P:biotin biosynthetic process"/>
    <property type="evidence" value="ECO:0007669"/>
    <property type="project" value="UniProtKB-UniRule"/>
</dbReference>
<dbReference type="CDD" id="cd01335">
    <property type="entry name" value="Radical_SAM"/>
    <property type="match status" value="1"/>
</dbReference>
<dbReference type="FunFam" id="3.20.20.70:FF:000026">
    <property type="entry name" value="Biotin synthase"/>
    <property type="match status" value="1"/>
</dbReference>
<dbReference type="Gene3D" id="3.20.20.70">
    <property type="entry name" value="Aldolase class I"/>
    <property type="match status" value="1"/>
</dbReference>
<dbReference type="HAMAP" id="MF_01694">
    <property type="entry name" value="BioB"/>
    <property type="match status" value="1"/>
</dbReference>
<dbReference type="InterPro" id="IPR013785">
    <property type="entry name" value="Aldolase_TIM"/>
</dbReference>
<dbReference type="InterPro" id="IPR010722">
    <property type="entry name" value="BATS_dom"/>
</dbReference>
<dbReference type="InterPro" id="IPR002684">
    <property type="entry name" value="Biotin_synth/BioAB"/>
</dbReference>
<dbReference type="InterPro" id="IPR024177">
    <property type="entry name" value="Biotin_synthase"/>
</dbReference>
<dbReference type="InterPro" id="IPR006638">
    <property type="entry name" value="Elp3/MiaA/NifB-like_rSAM"/>
</dbReference>
<dbReference type="InterPro" id="IPR007197">
    <property type="entry name" value="rSAM"/>
</dbReference>
<dbReference type="NCBIfam" id="TIGR00433">
    <property type="entry name" value="bioB"/>
    <property type="match status" value="1"/>
</dbReference>
<dbReference type="PANTHER" id="PTHR22976">
    <property type="entry name" value="BIOTIN SYNTHASE"/>
    <property type="match status" value="1"/>
</dbReference>
<dbReference type="PANTHER" id="PTHR22976:SF2">
    <property type="entry name" value="BIOTIN SYNTHASE, MITOCHONDRIAL"/>
    <property type="match status" value="1"/>
</dbReference>
<dbReference type="Pfam" id="PF06968">
    <property type="entry name" value="BATS"/>
    <property type="match status" value="1"/>
</dbReference>
<dbReference type="Pfam" id="PF04055">
    <property type="entry name" value="Radical_SAM"/>
    <property type="match status" value="1"/>
</dbReference>
<dbReference type="PIRSF" id="PIRSF001619">
    <property type="entry name" value="Biotin_synth"/>
    <property type="match status" value="1"/>
</dbReference>
<dbReference type="SFLD" id="SFLDG01278">
    <property type="entry name" value="biotin_synthase_like"/>
    <property type="match status" value="1"/>
</dbReference>
<dbReference type="SFLD" id="SFLDS00029">
    <property type="entry name" value="Radical_SAM"/>
    <property type="match status" value="1"/>
</dbReference>
<dbReference type="SMART" id="SM00876">
    <property type="entry name" value="BATS"/>
    <property type="match status" value="1"/>
</dbReference>
<dbReference type="SMART" id="SM00729">
    <property type="entry name" value="Elp3"/>
    <property type="match status" value="1"/>
</dbReference>
<dbReference type="SUPFAM" id="SSF102114">
    <property type="entry name" value="Radical SAM enzymes"/>
    <property type="match status" value="1"/>
</dbReference>
<dbReference type="PROSITE" id="PS51918">
    <property type="entry name" value="RADICAL_SAM"/>
    <property type="match status" value="1"/>
</dbReference>
<feature type="chain" id="PRO_0000381224" description="Biotin synthase">
    <location>
        <begin position="1"/>
        <end position="332"/>
    </location>
</feature>
<feature type="domain" description="Radical SAM core" evidence="2">
    <location>
        <begin position="53"/>
        <end position="282"/>
    </location>
</feature>
<feature type="binding site" evidence="1">
    <location>
        <position position="71"/>
    </location>
    <ligand>
        <name>[4Fe-4S] cluster</name>
        <dbReference type="ChEBI" id="CHEBI:49883"/>
        <note>4Fe-4S-S-AdoMet</note>
    </ligand>
</feature>
<feature type="binding site" evidence="1">
    <location>
        <position position="75"/>
    </location>
    <ligand>
        <name>[4Fe-4S] cluster</name>
        <dbReference type="ChEBI" id="CHEBI:49883"/>
        <note>4Fe-4S-S-AdoMet</note>
    </ligand>
</feature>
<feature type="binding site" evidence="1">
    <location>
        <position position="78"/>
    </location>
    <ligand>
        <name>[4Fe-4S] cluster</name>
        <dbReference type="ChEBI" id="CHEBI:49883"/>
        <note>4Fe-4S-S-AdoMet</note>
    </ligand>
</feature>
<feature type="binding site" evidence="1">
    <location>
        <position position="115"/>
    </location>
    <ligand>
        <name>[2Fe-2S] cluster</name>
        <dbReference type="ChEBI" id="CHEBI:190135"/>
    </ligand>
</feature>
<feature type="binding site" evidence="1">
    <location>
        <position position="147"/>
    </location>
    <ligand>
        <name>[2Fe-2S] cluster</name>
        <dbReference type="ChEBI" id="CHEBI:190135"/>
    </ligand>
</feature>
<feature type="binding site" evidence="1">
    <location>
        <position position="207"/>
    </location>
    <ligand>
        <name>[2Fe-2S] cluster</name>
        <dbReference type="ChEBI" id="CHEBI:190135"/>
    </ligand>
</feature>
<feature type="binding site" evidence="1">
    <location>
        <position position="277"/>
    </location>
    <ligand>
        <name>[2Fe-2S] cluster</name>
        <dbReference type="ChEBI" id="CHEBI:190135"/>
    </ligand>
</feature>
<reference key="1">
    <citation type="journal article" date="2009" name="J. Bacteriol.">
        <title>Complete genome sequence of the extremophilic Bacillus cereus strain Q1 with industrial applications.</title>
        <authorList>
            <person name="Xiong Z."/>
            <person name="Jiang Y."/>
            <person name="Qi D."/>
            <person name="Lu H."/>
            <person name="Yang F."/>
            <person name="Yang J."/>
            <person name="Chen L."/>
            <person name="Sun L."/>
            <person name="Xu X."/>
            <person name="Xue Y."/>
            <person name="Zhu Y."/>
            <person name="Jin Q."/>
        </authorList>
    </citation>
    <scope>NUCLEOTIDE SEQUENCE [LARGE SCALE GENOMIC DNA]</scope>
    <source>
        <strain>Q1</strain>
    </source>
</reference>
<name>BIOB_BACCQ</name>
<accession>B9IWX7</accession>